<keyword id="KW-0025">Alternative splicing</keyword>
<keyword id="KW-0067">ATP-binding</keyword>
<keyword id="KW-1003">Cell membrane</keyword>
<keyword id="KW-0217">Developmental protein</keyword>
<keyword id="KW-0967">Endosome</keyword>
<keyword id="KW-0333">Golgi apparatus</keyword>
<keyword id="KW-0418">Kinase</keyword>
<keyword id="KW-0472">Membrane</keyword>
<keyword id="KW-0547">Nucleotide-binding</keyword>
<keyword id="KW-0539">Nucleus</keyword>
<keyword id="KW-0597">Phosphoprotein</keyword>
<keyword id="KW-0611">Plant defense</keyword>
<keyword id="KW-1185">Reference proteome</keyword>
<keyword id="KW-0723">Serine/threonine-protein kinase</keyword>
<keyword id="KW-0808">Transferase</keyword>
<accession>O24527</accession>
<accession>Q56WD6</accession>
<accession>Q56WZ7</accession>
<accession>Q8VYC1</accession>
<accession>Q9LQA1</accession>
<feature type="chain" id="PRO_0000454501" description="Serine/threonine-protein kinase 1">
    <location>
        <begin position="1"/>
        <end position="836"/>
    </location>
</feature>
<feature type="domain" description="Protein kinase" evidence="2">
    <location>
        <begin position="249"/>
        <end position="503"/>
    </location>
</feature>
<feature type="region of interest" description="Disordered" evidence="4">
    <location>
        <begin position="1"/>
        <end position="244"/>
    </location>
</feature>
<feature type="region of interest" description="Disordered" evidence="4">
    <location>
        <begin position="539"/>
        <end position="571"/>
    </location>
</feature>
<feature type="region of interest" description="Disordered" evidence="4">
    <location>
        <begin position="600"/>
        <end position="640"/>
    </location>
</feature>
<feature type="region of interest" description="Disordered" evidence="4">
    <location>
        <begin position="760"/>
        <end position="780"/>
    </location>
</feature>
<feature type="compositionally biased region" description="Basic residues" evidence="4">
    <location>
        <begin position="1"/>
        <end position="12"/>
    </location>
</feature>
<feature type="compositionally biased region" description="Basic and acidic residues" evidence="4">
    <location>
        <begin position="28"/>
        <end position="40"/>
    </location>
</feature>
<feature type="compositionally biased region" description="Acidic residues" evidence="4">
    <location>
        <begin position="64"/>
        <end position="75"/>
    </location>
</feature>
<feature type="compositionally biased region" description="Acidic residues" evidence="4">
    <location>
        <begin position="95"/>
        <end position="105"/>
    </location>
</feature>
<feature type="compositionally biased region" description="Acidic residues" evidence="4">
    <location>
        <begin position="145"/>
        <end position="163"/>
    </location>
</feature>
<feature type="compositionally biased region" description="Polar residues" evidence="4">
    <location>
        <begin position="224"/>
        <end position="238"/>
    </location>
</feature>
<feature type="compositionally biased region" description="Polar residues" evidence="4">
    <location>
        <begin position="562"/>
        <end position="571"/>
    </location>
</feature>
<feature type="compositionally biased region" description="Basic and acidic residues" evidence="4">
    <location>
        <begin position="606"/>
        <end position="618"/>
    </location>
</feature>
<feature type="active site" description="Proton acceptor" evidence="2">
    <location>
        <position position="371"/>
    </location>
</feature>
<feature type="binding site" evidence="2">
    <location>
        <begin position="255"/>
        <end position="263"/>
    </location>
    <ligand>
        <name>ATP</name>
        <dbReference type="ChEBI" id="CHEBI:30616"/>
    </ligand>
</feature>
<feature type="binding site" evidence="2 3">
    <location>
        <position position="278"/>
    </location>
    <ligand>
        <name>ATP</name>
        <dbReference type="ChEBI" id="CHEBI:30616"/>
    </ligand>
</feature>
<feature type="splice variant" id="VSP_061351" description="In isoform 2.">
    <original>SKMSTTSLPDSITREDPTTKYEFLNELG</original>
    <variation>R</variation>
    <location>
        <begin position="229"/>
        <end position="256"/>
    </location>
</feature>
<feature type="mutagenesis site" description="Loss of kinase activity leading to a reduced autophosphorylation. Impaired ability to phosphorylate BIK1; when associated with A-371." evidence="6">
    <original>K</original>
    <variation>R</variation>
    <location>
        <position position="278"/>
    </location>
</feature>
<feature type="mutagenesis site" description="Loss of kinase activity. Impaired ability to phosphorylate BIK1; when associated with R-278." evidence="6">
    <original>D</original>
    <variation>A</variation>
    <location>
        <position position="371"/>
    </location>
</feature>
<dbReference type="EC" id="2.7.11.1" evidence="6"/>
<dbReference type="EMBL" id="U96613">
    <property type="protein sequence ID" value="AAB68776.1"/>
    <property type="molecule type" value="mRNA"/>
</dbReference>
<dbReference type="EMBL" id="AC008262">
    <property type="protein sequence ID" value="AAF27066.1"/>
    <property type="status" value="ALT_SEQ"/>
    <property type="molecule type" value="Genomic_DNA"/>
</dbReference>
<dbReference type="EMBL" id="AC018364">
    <property type="protein sequence ID" value="AAG52499.1"/>
    <property type="molecule type" value="Genomic_DNA"/>
</dbReference>
<dbReference type="EMBL" id="CP002684">
    <property type="protein sequence ID" value="AEE34896.1"/>
    <property type="molecule type" value="Genomic_DNA"/>
</dbReference>
<dbReference type="EMBL" id="CP002684">
    <property type="protein sequence ID" value="AEE34897.1"/>
    <property type="molecule type" value="Genomic_DNA"/>
</dbReference>
<dbReference type="EMBL" id="AY072199">
    <property type="protein sequence ID" value="AAL60020.1"/>
    <property type="molecule type" value="mRNA"/>
</dbReference>
<dbReference type="EMBL" id="AY133857">
    <property type="protein sequence ID" value="AAM91791.1"/>
    <property type="molecule type" value="mRNA"/>
</dbReference>
<dbReference type="EMBL" id="AK222106">
    <property type="protein sequence ID" value="BAD95044.1"/>
    <property type="molecule type" value="mRNA"/>
</dbReference>
<dbReference type="EMBL" id="AK221882">
    <property type="protein sequence ID" value="BAD94209.1"/>
    <property type="status" value="ALT_INIT"/>
    <property type="molecule type" value="mRNA"/>
</dbReference>
<dbReference type="PIR" id="B96716">
    <property type="entry name" value="B96716"/>
</dbReference>
<dbReference type="RefSeq" id="NP_564955.1">
    <molecule id="O24527-1"/>
    <property type="nucleotide sequence ID" value="NM_105589.4"/>
</dbReference>
<dbReference type="RefSeq" id="NP_849865.1">
    <molecule id="O24527-2"/>
    <property type="nucleotide sequence ID" value="NM_179534.2"/>
</dbReference>
<dbReference type="SMR" id="O24527"/>
<dbReference type="FunCoup" id="O24527">
    <property type="interactions" value="2329"/>
</dbReference>
<dbReference type="STRING" id="3702.O24527"/>
<dbReference type="iPTMnet" id="O24527"/>
<dbReference type="PaxDb" id="3702-AT1G69220.1"/>
<dbReference type="ProteomicsDB" id="183309"/>
<dbReference type="ProteomicsDB" id="191328"/>
<dbReference type="EnsemblPlants" id="AT1G69220.1">
    <molecule id="O24527-1"/>
    <property type="protein sequence ID" value="AT1G69220.1"/>
    <property type="gene ID" value="AT1G69220"/>
</dbReference>
<dbReference type="EnsemblPlants" id="AT1G69220.2">
    <molecule id="O24527-2"/>
    <property type="protein sequence ID" value="AT1G69220.2"/>
    <property type="gene ID" value="AT1G69220"/>
</dbReference>
<dbReference type="GeneID" id="843253"/>
<dbReference type="Gramene" id="AT1G69220.1">
    <molecule id="O24527-1"/>
    <property type="protein sequence ID" value="AT1G69220.1"/>
    <property type="gene ID" value="AT1G69220"/>
</dbReference>
<dbReference type="Gramene" id="AT1G69220.2">
    <molecule id="O24527-2"/>
    <property type="protein sequence ID" value="AT1G69220.2"/>
    <property type="gene ID" value="AT1G69220"/>
</dbReference>
<dbReference type="KEGG" id="ath:AT1G69220"/>
<dbReference type="Araport" id="AT1G69220"/>
<dbReference type="TAIR" id="AT1G69220">
    <property type="gene designation" value="SIK1"/>
</dbReference>
<dbReference type="eggNOG" id="KOG0576">
    <property type="taxonomic scope" value="Eukaryota"/>
</dbReference>
<dbReference type="HOGENOM" id="CLU_008661_0_0_1"/>
<dbReference type="InParanoid" id="O24527"/>
<dbReference type="OMA" id="YEEICGE"/>
<dbReference type="PhylomeDB" id="O24527"/>
<dbReference type="PRO" id="PR:O24527"/>
<dbReference type="Proteomes" id="UP000006548">
    <property type="component" value="Chromosome 1"/>
</dbReference>
<dbReference type="ExpressionAtlas" id="O24527">
    <property type="expression patterns" value="baseline and differential"/>
</dbReference>
<dbReference type="GO" id="GO:0005694">
    <property type="term" value="C:chromosome"/>
    <property type="evidence" value="ECO:0007005"/>
    <property type="project" value="TAIR"/>
</dbReference>
<dbReference type="GO" id="GO:0000775">
    <property type="term" value="C:chromosome, centromeric region"/>
    <property type="evidence" value="ECO:0007005"/>
    <property type="project" value="TAIR"/>
</dbReference>
<dbReference type="GO" id="GO:0005769">
    <property type="term" value="C:early endosome"/>
    <property type="evidence" value="ECO:0000314"/>
    <property type="project" value="TAIR"/>
</dbReference>
<dbReference type="GO" id="GO:0005739">
    <property type="term" value="C:mitochondrion"/>
    <property type="evidence" value="ECO:0007005"/>
    <property type="project" value="TAIR"/>
</dbReference>
<dbReference type="GO" id="GO:0005634">
    <property type="term" value="C:nucleus"/>
    <property type="evidence" value="ECO:0000314"/>
    <property type="project" value="TAIR"/>
</dbReference>
<dbReference type="GO" id="GO:0005886">
    <property type="term" value="C:plasma membrane"/>
    <property type="evidence" value="ECO:0000314"/>
    <property type="project" value="TAIR"/>
</dbReference>
<dbReference type="GO" id="GO:0005802">
    <property type="term" value="C:trans-Golgi network"/>
    <property type="evidence" value="ECO:0000314"/>
    <property type="project" value="TAIR"/>
</dbReference>
<dbReference type="GO" id="GO:0005524">
    <property type="term" value="F:ATP binding"/>
    <property type="evidence" value="ECO:0007669"/>
    <property type="project" value="UniProtKB-KW"/>
</dbReference>
<dbReference type="GO" id="GO:0004674">
    <property type="term" value="F:protein serine/threonine kinase activity"/>
    <property type="evidence" value="ECO:0000314"/>
    <property type="project" value="UniProtKB"/>
</dbReference>
<dbReference type="GO" id="GO:0042742">
    <property type="term" value="P:defense response to bacterium"/>
    <property type="evidence" value="ECO:0000315"/>
    <property type="project" value="UniProtKB"/>
</dbReference>
<dbReference type="GO" id="GO:0035556">
    <property type="term" value="P:intracellular signal transduction"/>
    <property type="evidence" value="ECO:0000314"/>
    <property type="project" value="UniProtKB"/>
</dbReference>
<dbReference type="GO" id="GO:0046777">
    <property type="term" value="P:protein autophosphorylation"/>
    <property type="evidence" value="ECO:0000314"/>
    <property type="project" value="UniProtKB"/>
</dbReference>
<dbReference type="GO" id="GO:0006468">
    <property type="term" value="P:protein phosphorylation"/>
    <property type="evidence" value="ECO:0000314"/>
    <property type="project" value="UniProtKB"/>
</dbReference>
<dbReference type="GO" id="GO:0001558">
    <property type="term" value="P:regulation of cell growth"/>
    <property type="evidence" value="ECO:0000315"/>
    <property type="project" value="TAIR"/>
</dbReference>
<dbReference type="GO" id="GO:0042127">
    <property type="term" value="P:regulation of cell population proliferation"/>
    <property type="evidence" value="ECO:0000315"/>
    <property type="project" value="TAIR"/>
</dbReference>
<dbReference type="GO" id="GO:1903426">
    <property type="term" value="P:regulation of reactive oxygen species biosynthetic process"/>
    <property type="evidence" value="ECO:0000315"/>
    <property type="project" value="UniProtKB"/>
</dbReference>
<dbReference type="GO" id="GO:0002237">
    <property type="term" value="P:response to molecule of bacterial origin"/>
    <property type="evidence" value="ECO:0000315"/>
    <property type="project" value="UniProtKB"/>
</dbReference>
<dbReference type="CDD" id="cd06613">
    <property type="entry name" value="STKc_MAP4K3_like"/>
    <property type="match status" value="1"/>
</dbReference>
<dbReference type="FunFam" id="3.30.200.20:FF:000042">
    <property type="entry name" value="Aurora kinase A"/>
    <property type="match status" value="1"/>
</dbReference>
<dbReference type="FunFam" id="1.10.510.10:FF:000207">
    <property type="entry name" value="serine/threonine-protein kinase dst1 isoform X1"/>
    <property type="match status" value="1"/>
</dbReference>
<dbReference type="Gene3D" id="1.10.510.10">
    <property type="entry name" value="Transferase(Phosphotransferase) domain 1"/>
    <property type="match status" value="1"/>
</dbReference>
<dbReference type="InterPro" id="IPR011009">
    <property type="entry name" value="Kinase-like_dom_sf"/>
</dbReference>
<dbReference type="InterPro" id="IPR000719">
    <property type="entry name" value="Prot_kinase_dom"/>
</dbReference>
<dbReference type="InterPro" id="IPR017441">
    <property type="entry name" value="Protein_kinase_ATP_BS"/>
</dbReference>
<dbReference type="InterPro" id="IPR050629">
    <property type="entry name" value="STE20/SPS1-PAK"/>
</dbReference>
<dbReference type="PANTHER" id="PTHR48012:SF18">
    <property type="entry name" value="HAPPYHOUR, ISOFORM A"/>
    <property type="match status" value="1"/>
</dbReference>
<dbReference type="PANTHER" id="PTHR48012">
    <property type="entry name" value="STERILE20-LIKE KINASE, ISOFORM B-RELATED"/>
    <property type="match status" value="1"/>
</dbReference>
<dbReference type="Pfam" id="PF00069">
    <property type="entry name" value="Pkinase"/>
    <property type="match status" value="1"/>
</dbReference>
<dbReference type="SMART" id="SM00220">
    <property type="entry name" value="S_TKc"/>
    <property type="match status" value="1"/>
</dbReference>
<dbReference type="SUPFAM" id="SSF56112">
    <property type="entry name" value="Protein kinase-like (PK-like)"/>
    <property type="match status" value="1"/>
</dbReference>
<dbReference type="PROSITE" id="PS00107">
    <property type="entry name" value="PROTEIN_KINASE_ATP"/>
    <property type="match status" value="1"/>
</dbReference>
<dbReference type="PROSITE" id="PS50011">
    <property type="entry name" value="PROTEIN_KINASE_DOM"/>
    <property type="match status" value="1"/>
</dbReference>
<proteinExistence type="evidence at protein level"/>
<evidence type="ECO:0000250" key="1">
    <source>
        <dbReference type="UniProtKB" id="P70218"/>
    </source>
</evidence>
<evidence type="ECO:0000255" key="2">
    <source>
        <dbReference type="PROSITE-ProRule" id="PRU00159"/>
    </source>
</evidence>
<evidence type="ECO:0000255" key="3">
    <source>
        <dbReference type="PROSITE-ProRule" id="PRU10141"/>
    </source>
</evidence>
<evidence type="ECO:0000256" key="4">
    <source>
        <dbReference type="SAM" id="MobiDB-lite"/>
    </source>
</evidence>
<evidence type="ECO:0000269" key="5">
    <source>
    </source>
</evidence>
<evidence type="ECO:0000269" key="6">
    <source>
    </source>
</evidence>
<evidence type="ECO:0000303" key="7">
    <source>
    </source>
</evidence>
<evidence type="ECO:0000303" key="8">
    <source>
    </source>
</evidence>
<evidence type="ECO:0000305" key="9"/>
<evidence type="ECO:0000312" key="10">
    <source>
        <dbReference type="Araport" id="AT1G69220"/>
    </source>
</evidence>
<evidence type="ECO:0000312" key="11">
    <source>
        <dbReference type="EMBL" id="AAF27066.1"/>
    </source>
</evidence>
<evidence type="ECO:0000312" key="12">
    <source>
        <dbReference type="EMBL" id="AAG52499.1"/>
    </source>
</evidence>
<name>SIK1_ARATH</name>
<reference key="1">
    <citation type="submission" date="1997-04" db="EMBL/GenBank/DDBJ databases">
        <title>Cloning of a Arabidopsis thaliana serine/threonine kinase with homology to yeast STE20 and mammalian stress activated kinases.</title>
        <authorList>
            <person name="Winge P."/>
            <person name="Brembu T."/>
            <person name="Bones A.M."/>
        </authorList>
    </citation>
    <scope>NUCLEOTIDE SEQUENCE [MRNA] (ISOFORM 1)</scope>
    <source>
        <strain>cv. Columbia</strain>
        <tissue>Hypocotyl</tissue>
    </source>
</reference>
<reference key="2">
    <citation type="journal article" date="2000" name="Nature">
        <title>Sequence and analysis of chromosome 1 of the plant Arabidopsis thaliana.</title>
        <authorList>
            <person name="Theologis A."/>
            <person name="Ecker J.R."/>
            <person name="Palm C.J."/>
            <person name="Federspiel N.A."/>
            <person name="Kaul S."/>
            <person name="White O."/>
            <person name="Alonso J."/>
            <person name="Altafi H."/>
            <person name="Araujo R."/>
            <person name="Bowman C.L."/>
            <person name="Brooks S.Y."/>
            <person name="Buehler E."/>
            <person name="Chan A."/>
            <person name="Chao Q."/>
            <person name="Chen H."/>
            <person name="Cheuk R.F."/>
            <person name="Chin C.W."/>
            <person name="Chung M.K."/>
            <person name="Conn L."/>
            <person name="Conway A.B."/>
            <person name="Conway A.R."/>
            <person name="Creasy T.H."/>
            <person name="Dewar K."/>
            <person name="Dunn P."/>
            <person name="Etgu P."/>
            <person name="Feldblyum T.V."/>
            <person name="Feng J.-D."/>
            <person name="Fong B."/>
            <person name="Fujii C.Y."/>
            <person name="Gill J.E."/>
            <person name="Goldsmith A.D."/>
            <person name="Haas B."/>
            <person name="Hansen N.F."/>
            <person name="Hughes B."/>
            <person name="Huizar L."/>
            <person name="Hunter J.L."/>
            <person name="Jenkins J."/>
            <person name="Johnson-Hopson C."/>
            <person name="Khan S."/>
            <person name="Khaykin E."/>
            <person name="Kim C.J."/>
            <person name="Koo H.L."/>
            <person name="Kremenetskaia I."/>
            <person name="Kurtz D.B."/>
            <person name="Kwan A."/>
            <person name="Lam B."/>
            <person name="Langin-Hooper S."/>
            <person name="Lee A."/>
            <person name="Lee J.M."/>
            <person name="Lenz C.A."/>
            <person name="Li J.H."/>
            <person name="Li Y.-P."/>
            <person name="Lin X."/>
            <person name="Liu S.X."/>
            <person name="Liu Z.A."/>
            <person name="Luros J.S."/>
            <person name="Maiti R."/>
            <person name="Marziali A."/>
            <person name="Militscher J."/>
            <person name="Miranda M."/>
            <person name="Nguyen M."/>
            <person name="Nierman W.C."/>
            <person name="Osborne B.I."/>
            <person name="Pai G."/>
            <person name="Peterson J."/>
            <person name="Pham P.K."/>
            <person name="Rizzo M."/>
            <person name="Rooney T."/>
            <person name="Rowley D."/>
            <person name="Sakano H."/>
            <person name="Salzberg S.L."/>
            <person name="Schwartz J.R."/>
            <person name="Shinn P."/>
            <person name="Southwick A.M."/>
            <person name="Sun H."/>
            <person name="Tallon L.J."/>
            <person name="Tambunga G."/>
            <person name="Toriumi M.J."/>
            <person name="Town C.D."/>
            <person name="Utterback T."/>
            <person name="Van Aken S."/>
            <person name="Vaysberg M."/>
            <person name="Vysotskaia V.S."/>
            <person name="Walker M."/>
            <person name="Wu D."/>
            <person name="Yu G."/>
            <person name="Fraser C.M."/>
            <person name="Venter J.C."/>
            <person name="Davis R.W."/>
        </authorList>
    </citation>
    <scope>NUCLEOTIDE SEQUENCE [LARGE SCALE GENOMIC DNA]</scope>
    <source>
        <strain>cv. Columbia</strain>
    </source>
</reference>
<reference key="3">
    <citation type="journal article" date="2017" name="Plant J.">
        <title>Araport11: a complete reannotation of the Arabidopsis thaliana reference genome.</title>
        <authorList>
            <person name="Cheng C.Y."/>
            <person name="Krishnakumar V."/>
            <person name="Chan A.P."/>
            <person name="Thibaud-Nissen F."/>
            <person name="Schobel S."/>
            <person name="Town C.D."/>
        </authorList>
    </citation>
    <scope>GENOME REANNOTATION</scope>
    <source>
        <strain>cv. Columbia</strain>
    </source>
</reference>
<reference key="4">
    <citation type="journal article" date="2003" name="Science">
        <title>Empirical analysis of transcriptional activity in the Arabidopsis genome.</title>
        <authorList>
            <person name="Yamada K."/>
            <person name="Lim J."/>
            <person name="Dale J.M."/>
            <person name="Chen H."/>
            <person name="Shinn P."/>
            <person name="Palm C.J."/>
            <person name="Southwick A.M."/>
            <person name="Wu H.C."/>
            <person name="Kim C.J."/>
            <person name="Nguyen M."/>
            <person name="Pham P.K."/>
            <person name="Cheuk R.F."/>
            <person name="Karlin-Newmann G."/>
            <person name="Liu S.X."/>
            <person name="Lam B."/>
            <person name="Sakano H."/>
            <person name="Wu T."/>
            <person name="Yu G."/>
            <person name="Miranda M."/>
            <person name="Quach H.L."/>
            <person name="Tripp M."/>
            <person name="Chang C.H."/>
            <person name="Lee J.M."/>
            <person name="Toriumi M.J."/>
            <person name="Chan M.M."/>
            <person name="Tang C.C."/>
            <person name="Onodera C.S."/>
            <person name="Deng J.M."/>
            <person name="Akiyama K."/>
            <person name="Ansari Y."/>
            <person name="Arakawa T."/>
            <person name="Banh J."/>
            <person name="Banno F."/>
            <person name="Bowser L."/>
            <person name="Brooks S.Y."/>
            <person name="Carninci P."/>
            <person name="Chao Q."/>
            <person name="Choy N."/>
            <person name="Enju A."/>
            <person name="Goldsmith A.D."/>
            <person name="Gurjal M."/>
            <person name="Hansen N.F."/>
            <person name="Hayashizaki Y."/>
            <person name="Johnson-Hopson C."/>
            <person name="Hsuan V.W."/>
            <person name="Iida K."/>
            <person name="Karnes M."/>
            <person name="Khan S."/>
            <person name="Koesema E."/>
            <person name="Ishida J."/>
            <person name="Jiang P.X."/>
            <person name="Jones T."/>
            <person name="Kawai J."/>
            <person name="Kamiya A."/>
            <person name="Meyers C."/>
            <person name="Nakajima M."/>
            <person name="Narusaka M."/>
            <person name="Seki M."/>
            <person name="Sakurai T."/>
            <person name="Satou M."/>
            <person name="Tamse R."/>
            <person name="Vaysberg M."/>
            <person name="Wallender E.K."/>
            <person name="Wong C."/>
            <person name="Yamamura Y."/>
            <person name="Yuan S."/>
            <person name="Shinozaki K."/>
            <person name="Davis R.W."/>
            <person name="Theologis A."/>
            <person name="Ecker J.R."/>
        </authorList>
    </citation>
    <scope>NUCLEOTIDE SEQUENCE [LARGE SCALE MRNA] (ISOFORM 2)</scope>
    <source>
        <strain>cv. Columbia</strain>
    </source>
</reference>
<reference key="5">
    <citation type="submission" date="2005-03" db="EMBL/GenBank/DDBJ databases">
        <title>Large-scale analysis of RIKEN Arabidopsis full-length (RAFL) cDNAs.</title>
        <authorList>
            <person name="Totoki Y."/>
            <person name="Seki M."/>
            <person name="Ishida J."/>
            <person name="Nakajima M."/>
            <person name="Enju A."/>
            <person name="Kamiya A."/>
            <person name="Narusaka M."/>
            <person name="Shin-i T."/>
            <person name="Nakagawa M."/>
            <person name="Sakamoto N."/>
            <person name="Oishi K."/>
            <person name="Kohara Y."/>
            <person name="Kobayashi M."/>
            <person name="Toyoda A."/>
            <person name="Sakaki Y."/>
            <person name="Sakurai T."/>
            <person name="Iida K."/>
            <person name="Akiyama K."/>
            <person name="Satou M."/>
            <person name="Toyoda T."/>
            <person name="Konagaya A."/>
            <person name="Carninci P."/>
            <person name="Kawai J."/>
            <person name="Hayashizaki Y."/>
            <person name="Shinozaki K."/>
        </authorList>
    </citation>
    <scope>NUCLEOTIDE SEQUENCE [LARGE SCALE MRNA] OF 420-836 (ISOFORM 1/2)</scope>
    <source>
        <strain>cv. Columbia</strain>
    </source>
</reference>
<reference key="6">
    <citation type="journal article" date="2016" name="J. Exp. Bot.">
        <title>The Hippo/STE20 homolog SIK1 interacts with MOB1 to regulate cell proliferation and cell expansion in Arabidopsis.</title>
        <authorList>
            <person name="Xiong J."/>
            <person name="Cui X."/>
            <person name="Yuan X."/>
            <person name="Yu X."/>
            <person name="Sun J."/>
            <person name="Gong Q."/>
        </authorList>
    </citation>
    <scope>FUNCTION</scope>
    <scope>DISRUPTION PHENOTYPE</scope>
    <scope>INTERACTION WITH MOB1A AND MOB1B</scope>
    <scope>TISSUE SPECIFICITY</scope>
    <scope>DEVELOPMENTAL STAGE</scope>
    <scope>SUBCELLULAR LOCATION</scope>
    <source>
        <strain>cv. Columbia</strain>
    </source>
</reference>
<reference key="7">
    <citation type="journal article" date="2018" name="Cell Host Microbe">
        <title>The MAP4 Kinase SIK1 Ensures Robust Extracellular ROS Burst and Antibacterial Immunity in Plants.</title>
        <authorList>
            <person name="Zhang M."/>
            <person name="Chiang Y.-H."/>
            <person name="Toruno T.Y."/>
            <person name="Lee D."/>
            <person name="Ma M."/>
            <person name="Liang X."/>
            <person name="Lal N.K."/>
            <person name="Lemos M."/>
            <person name="Lu Y.-J."/>
            <person name="Ma S."/>
            <person name="Liu J."/>
            <person name="Day B."/>
            <person name="Dinesh-Kumar S.P."/>
            <person name="Dehesh K."/>
            <person name="Dou D."/>
            <person name="Zhou J.-M."/>
            <person name="Coaker G."/>
        </authorList>
    </citation>
    <scope>FUNCTION</scope>
    <scope>MUTAGENESIS OF LYS-278 AND ASP-371</scope>
    <scope>DISRUPTION PHENOTYPE</scope>
    <scope>CATALYTIC ACTIVITY</scope>
    <scope>AUTOPHOSPHORYLATION</scope>
    <scope>INTERACTION WITH BIK1</scope>
    <source>
        <strain>cv. Columbia</strain>
    </source>
</reference>
<organism>
    <name type="scientific">Arabidopsis thaliana</name>
    <name type="common">Mouse-ear cress</name>
    <dbReference type="NCBI Taxonomy" id="3702"/>
    <lineage>
        <taxon>Eukaryota</taxon>
        <taxon>Viridiplantae</taxon>
        <taxon>Streptophyta</taxon>
        <taxon>Embryophyta</taxon>
        <taxon>Tracheophyta</taxon>
        <taxon>Spermatophyta</taxon>
        <taxon>Magnoliopsida</taxon>
        <taxon>eudicotyledons</taxon>
        <taxon>Gunneridae</taxon>
        <taxon>Pentapetalae</taxon>
        <taxon>rosids</taxon>
        <taxon>malvids</taxon>
        <taxon>Brassicales</taxon>
        <taxon>Brassicaceae</taxon>
        <taxon>Camelineae</taxon>
        <taxon>Arabidopsis</taxon>
    </lineage>
</organism>
<comment type="function">
    <text evidence="5 6">Serine/threonine-protein kinase (PubMed:30212650). Regulates organ size in coordination with MOB1A by modulating cell proliferation and cell expansion, possibly by facilitating cell cycle exit (PubMed:26685188). Positive regulator of the pathogen-associated molecular pattern (PAMP, e.g. flg22)-triggered immunity (PTI) signaling by stabilizing BIK1 and activating RBOHD by phosphorylation to promote the extracellular reactive oxygen species (ROS) burst involved in defense responses to bacterial infection (PubMed:30212650).</text>
</comment>
<comment type="catalytic activity">
    <reaction evidence="6">
        <text>L-seryl-[protein] + ATP = O-phospho-L-seryl-[protein] + ADP + H(+)</text>
        <dbReference type="Rhea" id="RHEA:17989"/>
        <dbReference type="Rhea" id="RHEA-COMP:9863"/>
        <dbReference type="Rhea" id="RHEA-COMP:11604"/>
        <dbReference type="ChEBI" id="CHEBI:15378"/>
        <dbReference type="ChEBI" id="CHEBI:29999"/>
        <dbReference type="ChEBI" id="CHEBI:30616"/>
        <dbReference type="ChEBI" id="CHEBI:83421"/>
        <dbReference type="ChEBI" id="CHEBI:456216"/>
        <dbReference type="EC" id="2.7.11.1"/>
    </reaction>
</comment>
<comment type="catalytic activity">
    <reaction evidence="6">
        <text>L-threonyl-[protein] + ATP = O-phospho-L-threonyl-[protein] + ADP + H(+)</text>
        <dbReference type="Rhea" id="RHEA:46608"/>
        <dbReference type="Rhea" id="RHEA-COMP:11060"/>
        <dbReference type="Rhea" id="RHEA-COMP:11605"/>
        <dbReference type="ChEBI" id="CHEBI:15378"/>
        <dbReference type="ChEBI" id="CHEBI:30013"/>
        <dbReference type="ChEBI" id="CHEBI:30616"/>
        <dbReference type="ChEBI" id="CHEBI:61977"/>
        <dbReference type="ChEBI" id="CHEBI:456216"/>
        <dbReference type="EC" id="2.7.11.1"/>
    </reaction>
</comment>
<comment type="cofactor">
    <cofactor evidence="1">
        <name>Mn(2+)</name>
        <dbReference type="ChEBI" id="CHEBI:29035"/>
    </cofactor>
</comment>
<comment type="subunit">
    <text evidence="5 6">Interacts with MOB1A and MOB1B via its N-terminal region at the plasma membrane and in the nucleus (PubMed:26685188). Binds to BIK1 to phosphorylate and stabilize it (PubMed:30212650). Interacts with and phosphorylates RBOHD upon flagellin perception to activate it (PubMed:30212650).</text>
</comment>
<comment type="subcellular location">
    <subcellularLocation>
        <location evidence="5">Cell membrane</location>
    </subcellularLocation>
    <subcellularLocation>
        <location evidence="5">Nucleus</location>
    </subcellularLocation>
    <subcellularLocation>
        <location evidence="5">Golgi apparatus</location>
        <location evidence="5">trans-Golgi network</location>
    </subcellularLocation>
    <subcellularLocation>
        <location evidence="5">Early endosome</location>
    </subcellularLocation>
    <text evidence="5">Observed at the plasma membrane and in the nucleus when associated with MOB1A.</text>
</comment>
<comment type="alternative products">
    <event type="alternative splicing"/>
    <isoform>
        <id>O24527-1</id>
        <name>1</name>
        <sequence type="displayed"/>
    </isoform>
    <isoform>
        <id>O24527-2</id>
        <name>2</name>
        <sequence type="described" ref="VSP_061351"/>
    </isoform>
</comment>
<comment type="tissue specificity">
    <text evidence="5">Mostly expressed in mature tissues of roots, shoots, hypocotyls, cotyledons, stems, leaves and flowers, as well as in the shoot apical meristem (SAM).</text>
</comment>
<comment type="developmental stage">
    <text evidence="5">In seedlings, observed in the hypocotyls of both etiolated and light-grown plants (PubMed:26685188). Also expressed in the quiescent center and the maturation zone of primary roots (PubMed:26685188). Later present in cotyledons and the first pair of true leaves (PubMed:26685188). Accumulates strongly in mature rosette leaves (PubMed:26685188). Detected in the pollen of opened flowers (PubMed:26685188). Lower levels in dividing tissues (PubMed:26685188). Present in developed vascular tissues, stipules of true leaves, mature trichomes and guard cells (PubMed:26685188).</text>
</comment>
<comment type="PTM">
    <text evidence="6">Autophosphorylates.</text>
</comment>
<comment type="disruption phenotype">
    <text evidence="5 6">Dwarf plants with reduced cell numbers, endoreduplication and cell expansion leading to a slow growth (PubMed:26685188, PubMed:30212650). Altered pathogen-associated molecular pattern (PAMP)-triggered immunity (PTI) signaling characterized by a compromised ability to elicit a reactive oxygen species (ROS) burst in response to microbial features (e.g. flg22) (PubMed:30212650). Enhanced resistance to the bacterial pathogen Pseudomonas syringae pv. tomato DC3000 (Pst) due to high levels of salicylic acid (SA) and subsequent constitutive expression of pathogenesis-related genes (e.g. PR1) and associated with reduced jasmonic acid (JA) levels (PubMed:30212650). The double mutant sik1 mob1a is arrested at the seedling stage (PubMed:26685188).</text>
</comment>
<comment type="similarity">
    <text evidence="9">Belongs to the protein kinase superfamily. STE Ser/Thr protein kinase family. STE20 subfamily.</text>
</comment>
<comment type="sequence caution" evidence="9">
    <conflict type="erroneous gene model prediction">
        <sequence resource="EMBL-CDS" id="AAF27066"/>
    </conflict>
</comment>
<comment type="sequence caution" evidence="9">
    <conflict type="erroneous initiation">
        <sequence resource="EMBL-CDS" id="BAD94209"/>
    </conflict>
    <text>Truncated N-terminus.</text>
</comment>
<sequence>MDHNSPKSRRSRKPEPKPDIYSTFVVHSDSDSDQGRDRDKRKAKPEEDENVDLYATMVYKGDSDGEGEEDDDDDSMLPPLLKRLPKDFGGGASLDYDDDDGDESGDFGTMIVKTDRSSHSKKNSPYSSKPRMGVSPRRRARGGDEESSDEEDEEEDDDDDDGDYGTFVVKSKDKKGKKKDKEIDMTTMGRAVASMQKSNFGGKTRKLDPSSSSSKLHGEDNRKMQQQNSKMSTTSLPDSITREDPTTKYEFLNELGKGSYGSVYKARDLKTSEIVAVKVISLTEGEEGYEEIRGEIEMLQQCNHPNVVRYLGSYQGEDYLWIVMEYCGGGSVADLMNVTEEALEEYQIAYICREALKGLAYLHSIYKVHRDIKGGNILLTEQGEVKLGDFGVAAQLTRTMSKRNTFIGTPHWMAPEVIQENRYDGKVDVWALGVSAIEMAEGLPPRSSVHPMRVLFMISIEPAPMLEDKEKWSLVFHDFVAKCLTKEPRLRPTAAEMLKHKFVERCKTGASAMSPKIEKSRQIRATMALQAQSVVAPSLEDTSTLGPKSSEELGITVPSKPPQNSTEAPLTSTLNRQHITGNTVLAGEGGDFGTMIVHGEDETEESDSRSQLVREKESSSSQFEGVPREFPGEELPDSWIHDKKKPPAIDLPVEASISQSMQASSSHEHRTKLHNIAGTQMEGGSDASGSTLKNETVGRKAFALQDKLWSIYAAGNTVPIPFLRATDISPIALLSENMIGGMQQDGNGTVAVEALQELFTSSDPQSKKGRRGQNEMPLPPSVYQRLTTSSSLMNLAQVLAYHRACYEEMPLQELQATQEQQTIQNLCDTLRTILRL</sequence>
<gene>
    <name evidence="7 8" type="primary">SIK1</name>
    <name evidence="10" type="ordered locus">At1g69220</name>
    <name evidence="12" type="ORF">F23O10.20</name>
    <name evidence="11" type="ORF">F4N2.24</name>
</gene>
<protein>
    <recommendedName>
        <fullName evidence="7 8">Serine/threonine-protein kinase 1</fullName>
        <ecNumber evidence="6">2.7.11.1</ecNumber>
    </recommendedName>
</protein>